<organism>
    <name type="scientific">Tupiella akineta</name>
    <name type="common">Green alga</name>
    <name type="synonym">Pseudendoclonium akinetum</name>
    <dbReference type="NCBI Taxonomy" id="160070"/>
    <lineage>
        <taxon>Eukaryota</taxon>
        <taxon>Viridiplantae</taxon>
        <taxon>Chlorophyta</taxon>
        <taxon>Ulvophyceae</taxon>
        <taxon>OUU clade</taxon>
        <taxon>Ulotrichales</taxon>
        <taxon>Tupiellaceae</taxon>
        <taxon>Tupiella</taxon>
    </lineage>
</organism>
<comment type="subcellular location">
    <subcellularLocation>
        <location evidence="3">Plastid</location>
        <location evidence="3">Chloroplast membrane</location>
        <topology evidence="3">Multi-pass membrane protein</topology>
    </subcellularLocation>
</comment>
<comment type="similarity">
    <text evidence="3">Belongs to the ycf78 family.</text>
</comment>
<geneLocation type="chloroplast"/>
<evidence type="ECO:0000255" key="1"/>
<evidence type="ECO:0000256" key="2">
    <source>
        <dbReference type="SAM" id="MobiDB-lite"/>
    </source>
</evidence>
<evidence type="ECO:0000305" key="3"/>
<accession>Q3ZJ04</accession>
<dbReference type="EMBL" id="AY835431">
    <property type="protein sequence ID" value="AAV80685.1"/>
    <property type="molecule type" value="Genomic_DNA"/>
</dbReference>
<dbReference type="RefSeq" id="YP_636263.1">
    <property type="nucleotide sequence ID" value="NC_008114.1"/>
</dbReference>
<dbReference type="GeneID" id="4108828"/>
<dbReference type="GO" id="GO:0031969">
    <property type="term" value="C:chloroplast membrane"/>
    <property type="evidence" value="ECO:0007669"/>
    <property type="project" value="UniProtKB-SubCell"/>
</dbReference>
<sequence>MFFANALKDYIDQLNDLTILLNDNFTVFTFLKSLIIYLFDSIKFVFIYLVSCKWLTDFIELPCTFKSNYTAILEGKSILETNVTPSFFHFLETKPLTSNSFLTGFLNSFFLTLPFSVPHLLSLRAFLINGLPAGISAALGTILGQFTFFICVFFGFEGILIPFLTFEPLNYILGFVIVVNVLYNMAHKPNMEVLNKSQLTILSKFFGLNFVLSWTEQTSLFHYCGNLTFNNVPTLLQSAEEGVSKLNGITTFFLPNFLYLVGILLGSFLWTALLGFLFTIFRNGLSRVLTIPFMFLNDKIHKFIFVLTFTFCLTSIPYYGFDYLVSAPLGFIGQDRALEFFKAKPYYQIATPAKDKVYGEVFLNPIPFDRTGQLELQLSEKPVATFEDYSVDSENAWRNRQKRRPQNTKLQSTQTSRKTFENKERNQDQTFIETFYKSIKITEKSKLSKVEKDIDQIASKLFNPIAYDYYDQGMDHSPYTRKLFREKFYNNPVYKSFVHLDMISFLQGQPESYNLTAIDEAALYRRRFLLENYLASIHDYKDLILKKQTNNSYAENVYNQQFKGSLDLVRHYFSISLTSDINQFDSFGSLLLSDNQKTKKILKFDQPLYKNYLQESNPILHEELDLEVKTNLLQNSVKKKKTELFKKDREVTLTQSKEETEATPFYIGWDGTLRKFLVKKACTPGIPFGNEAFSKNPTPYLPTGLPTYLSFQSWPLNLNENNFKSIFDKGVSIPYTPLSKENALKVAELFELENFKFDHANLSNLLQNQNLPLYNWNILLGNSKDPLLPKNLNAYIDLGNTLPPQFGGFAWPGETIKLPGFLNFLNSNKNDSSF</sequence>
<reference key="1">
    <citation type="journal article" date="2005" name="Mol. Biol. Evol.">
        <title>The chloroplast genome sequence of the green alga Pseudendoclonium akinetum (Ulvophyceae) reveals unusual structural features and new insights into the branching order of chlorophyte lineages.</title>
        <authorList>
            <person name="Pombert J.-F."/>
            <person name="Otis C."/>
            <person name="Lemieux C."/>
            <person name="Turmel M."/>
        </authorList>
    </citation>
    <scope>NUCLEOTIDE SEQUENCE [LARGE SCALE GENOMIC DNA]</scope>
    <source>
        <strain>UTEX 1912</strain>
    </source>
</reference>
<gene>
    <name type="primary">ycf78</name>
    <name type="synonym">ycf1</name>
</gene>
<name>YCF78_TUPAK</name>
<protein>
    <recommendedName>
        <fullName>Uncharacterized membrane protein ycf78</fullName>
    </recommendedName>
    <alternativeName>
        <fullName>ycf1</fullName>
    </alternativeName>
</protein>
<keyword id="KW-0150">Chloroplast</keyword>
<keyword id="KW-0472">Membrane</keyword>
<keyword id="KW-0934">Plastid</keyword>
<keyword id="KW-0812">Transmembrane</keyword>
<keyword id="KW-1133">Transmembrane helix</keyword>
<feature type="chain" id="PRO_0000293984" description="Uncharacterized membrane protein ycf78">
    <location>
        <begin position="1"/>
        <end position="834"/>
    </location>
</feature>
<feature type="transmembrane region" description="Helical" evidence="1">
    <location>
        <begin position="30"/>
        <end position="50"/>
    </location>
</feature>
<feature type="transmembrane region" description="Helical" evidence="1">
    <location>
        <begin position="101"/>
        <end position="121"/>
    </location>
</feature>
<feature type="transmembrane region" description="Helical" evidence="1">
    <location>
        <begin position="125"/>
        <end position="145"/>
    </location>
</feature>
<feature type="transmembrane region" description="Helical" evidence="1">
    <location>
        <begin position="167"/>
        <end position="187"/>
    </location>
</feature>
<feature type="transmembrane region" description="Helical" evidence="1">
    <location>
        <begin position="261"/>
        <end position="281"/>
    </location>
</feature>
<feature type="transmembrane region" description="Helical" evidence="1">
    <location>
        <begin position="303"/>
        <end position="323"/>
    </location>
</feature>
<feature type="region of interest" description="Disordered" evidence="2">
    <location>
        <begin position="397"/>
        <end position="424"/>
    </location>
</feature>
<feature type="compositionally biased region" description="Polar residues" evidence="2">
    <location>
        <begin position="407"/>
        <end position="417"/>
    </location>
</feature>
<proteinExistence type="inferred from homology"/>